<sequence>MKKKDKGRLTGGVTPQGDLEGNTHNDPKTELEERAKKSNTKR</sequence>
<comment type="subcellular location">
    <subcellularLocation>
        <location evidence="2">Spore core</location>
    </subcellularLocation>
</comment>
<comment type="developmental stage">
    <text>Expressed only in the forespore compartment of sporulating cells. Disappears after 45 minutes of spore germination.</text>
</comment>
<comment type="induction">
    <text>Expression is sigma G-dependent.</text>
</comment>
<feature type="chain" id="PRO_0000072224" description="Small, acid-soluble spore protein L">
    <location>
        <begin position="1"/>
        <end position="42"/>
    </location>
</feature>
<feature type="region of interest" description="Disordered" evidence="1">
    <location>
        <begin position="1"/>
        <end position="42"/>
    </location>
</feature>
<feature type="compositionally biased region" description="Basic and acidic residues" evidence="1">
    <location>
        <begin position="21"/>
        <end position="36"/>
    </location>
</feature>
<name>SSPL_BACSU</name>
<gene>
    <name type="primary">sspL</name>
    <name type="ordered locus">BSU22000</name>
</gene>
<organism>
    <name type="scientific">Bacillus subtilis (strain 168)</name>
    <dbReference type="NCBI Taxonomy" id="224308"/>
    <lineage>
        <taxon>Bacteria</taxon>
        <taxon>Bacillati</taxon>
        <taxon>Bacillota</taxon>
        <taxon>Bacilli</taxon>
        <taxon>Bacillales</taxon>
        <taxon>Bacillaceae</taxon>
        <taxon>Bacillus</taxon>
    </lineage>
</organism>
<keyword id="KW-0903">Direct protein sequencing</keyword>
<keyword id="KW-1185">Reference proteome</keyword>
<keyword id="KW-0749">Sporulation</keyword>
<dbReference type="EMBL" id="AL009126">
    <property type="protein sequence ID" value="CAE01458.1"/>
    <property type="molecule type" value="Genomic_DNA"/>
</dbReference>
<dbReference type="RefSeq" id="WP_003218255.1">
    <property type="nucleotide sequence ID" value="NZ_OZ025638.1"/>
</dbReference>
<dbReference type="RefSeq" id="YP_054584.1">
    <property type="nucleotide sequence ID" value="NC_000964.3"/>
</dbReference>
<dbReference type="FunCoup" id="Q7WY66">
    <property type="interactions" value="14"/>
</dbReference>
<dbReference type="STRING" id="224308.BSU22000"/>
<dbReference type="PaxDb" id="224308-BSU22000"/>
<dbReference type="EnsemblBacteria" id="CAE01458">
    <property type="protein sequence ID" value="CAE01458"/>
    <property type="gene ID" value="BSU_22000"/>
</dbReference>
<dbReference type="GeneID" id="2914255"/>
<dbReference type="GeneID" id="86873266"/>
<dbReference type="KEGG" id="bsu:BSU22000"/>
<dbReference type="PATRIC" id="fig|224308.179.peg.2402"/>
<dbReference type="InParanoid" id="Q7WY66"/>
<dbReference type="OrthoDB" id="2900093at2"/>
<dbReference type="BioCyc" id="BSUB:BSU22000-MONOMER"/>
<dbReference type="PRO" id="PR:Q7WY66"/>
<dbReference type="Proteomes" id="UP000001570">
    <property type="component" value="Chromosome"/>
</dbReference>
<dbReference type="GO" id="GO:0030435">
    <property type="term" value="P:sporulation resulting in formation of a cellular spore"/>
    <property type="evidence" value="ECO:0007669"/>
    <property type="project" value="UniProtKB-KW"/>
</dbReference>
<dbReference type="InterPro" id="IPR017526">
    <property type="entry name" value="SASP_SspL"/>
</dbReference>
<dbReference type="NCBIfam" id="TIGR03093">
    <property type="entry name" value="SASP_sspL"/>
    <property type="match status" value="1"/>
</dbReference>
<proteinExistence type="evidence at protein level"/>
<accession>Q7WY66</accession>
<protein>
    <recommendedName>
        <fullName>Small, acid-soluble spore protein L</fullName>
        <shortName>SASP L</shortName>
    </recommendedName>
</protein>
<evidence type="ECO:0000256" key="1">
    <source>
        <dbReference type="SAM" id="MobiDB-lite"/>
    </source>
</evidence>
<evidence type="ECO:0000269" key="2">
    <source>
    </source>
</evidence>
<reference key="1">
    <citation type="journal article" date="1997" name="Nature">
        <title>The complete genome sequence of the Gram-positive bacterium Bacillus subtilis.</title>
        <authorList>
            <person name="Kunst F."/>
            <person name="Ogasawara N."/>
            <person name="Moszer I."/>
            <person name="Albertini A.M."/>
            <person name="Alloni G."/>
            <person name="Azevedo V."/>
            <person name="Bertero M.G."/>
            <person name="Bessieres P."/>
            <person name="Bolotin A."/>
            <person name="Borchert S."/>
            <person name="Borriss R."/>
            <person name="Boursier L."/>
            <person name="Brans A."/>
            <person name="Braun M."/>
            <person name="Brignell S.C."/>
            <person name="Bron S."/>
            <person name="Brouillet S."/>
            <person name="Bruschi C.V."/>
            <person name="Caldwell B."/>
            <person name="Capuano V."/>
            <person name="Carter N.M."/>
            <person name="Choi S.-K."/>
            <person name="Codani J.-J."/>
            <person name="Connerton I.F."/>
            <person name="Cummings N.J."/>
            <person name="Daniel R.A."/>
            <person name="Denizot F."/>
            <person name="Devine K.M."/>
            <person name="Duesterhoeft A."/>
            <person name="Ehrlich S.D."/>
            <person name="Emmerson P.T."/>
            <person name="Entian K.-D."/>
            <person name="Errington J."/>
            <person name="Fabret C."/>
            <person name="Ferrari E."/>
            <person name="Foulger D."/>
            <person name="Fritz C."/>
            <person name="Fujita M."/>
            <person name="Fujita Y."/>
            <person name="Fuma S."/>
            <person name="Galizzi A."/>
            <person name="Galleron N."/>
            <person name="Ghim S.-Y."/>
            <person name="Glaser P."/>
            <person name="Goffeau A."/>
            <person name="Golightly E.J."/>
            <person name="Grandi G."/>
            <person name="Guiseppi G."/>
            <person name="Guy B.J."/>
            <person name="Haga K."/>
            <person name="Haiech J."/>
            <person name="Harwood C.R."/>
            <person name="Henaut A."/>
            <person name="Hilbert H."/>
            <person name="Holsappel S."/>
            <person name="Hosono S."/>
            <person name="Hullo M.-F."/>
            <person name="Itaya M."/>
            <person name="Jones L.-M."/>
            <person name="Joris B."/>
            <person name="Karamata D."/>
            <person name="Kasahara Y."/>
            <person name="Klaerr-Blanchard M."/>
            <person name="Klein C."/>
            <person name="Kobayashi Y."/>
            <person name="Koetter P."/>
            <person name="Koningstein G."/>
            <person name="Krogh S."/>
            <person name="Kumano M."/>
            <person name="Kurita K."/>
            <person name="Lapidus A."/>
            <person name="Lardinois S."/>
            <person name="Lauber J."/>
            <person name="Lazarevic V."/>
            <person name="Lee S.-M."/>
            <person name="Levine A."/>
            <person name="Liu H."/>
            <person name="Masuda S."/>
            <person name="Mauel C."/>
            <person name="Medigue C."/>
            <person name="Medina N."/>
            <person name="Mellado R.P."/>
            <person name="Mizuno M."/>
            <person name="Moestl D."/>
            <person name="Nakai S."/>
            <person name="Noback M."/>
            <person name="Noone D."/>
            <person name="O'Reilly M."/>
            <person name="Ogawa K."/>
            <person name="Ogiwara A."/>
            <person name="Oudega B."/>
            <person name="Park S.-H."/>
            <person name="Parro V."/>
            <person name="Pohl T.M."/>
            <person name="Portetelle D."/>
            <person name="Porwollik S."/>
            <person name="Prescott A.M."/>
            <person name="Presecan E."/>
            <person name="Pujic P."/>
            <person name="Purnelle B."/>
            <person name="Rapoport G."/>
            <person name="Rey M."/>
            <person name="Reynolds S."/>
            <person name="Rieger M."/>
            <person name="Rivolta C."/>
            <person name="Rocha E."/>
            <person name="Roche B."/>
            <person name="Rose M."/>
            <person name="Sadaie Y."/>
            <person name="Sato T."/>
            <person name="Scanlan E."/>
            <person name="Schleich S."/>
            <person name="Schroeter R."/>
            <person name="Scoffone F."/>
            <person name="Sekiguchi J."/>
            <person name="Sekowska A."/>
            <person name="Seror S.J."/>
            <person name="Serror P."/>
            <person name="Shin B.-S."/>
            <person name="Soldo B."/>
            <person name="Sorokin A."/>
            <person name="Tacconi E."/>
            <person name="Takagi T."/>
            <person name="Takahashi H."/>
            <person name="Takemaru K."/>
            <person name="Takeuchi M."/>
            <person name="Tamakoshi A."/>
            <person name="Tanaka T."/>
            <person name="Terpstra P."/>
            <person name="Tognoni A."/>
            <person name="Tosato V."/>
            <person name="Uchiyama S."/>
            <person name="Vandenbol M."/>
            <person name="Vannier F."/>
            <person name="Vassarotti A."/>
            <person name="Viari A."/>
            <person name="Wambutt R."/>
            <person name="Wedler E."/>
            <person name="Wedler H."/>
            <person name="Weitzenegger T."/>
            <person name="Winters P."/>
            <person name="Wipat A."/>
            <person name="Yamamoto H."/>
            <person name="Yamane K."/>
            <person name="Yasumoto K."/>
            <person name="Yata K."/>
            <person name="Yoshida K."/>
            <person name="Yoshikawa H.-F."/>
            <person name="Zumstein E."/>
            <person name="Yoshikawa H."/>
            <person name="Danchin A."/>
        </authorList>
    </citation>
    <scope>NUCLEOTIDE SEQUENCE [LARGE SCALE GENOMIC DNA]</scope>
    <source>
        <strain>168</strain>
    </source>
</reference>
<reference key="2">
    <citation type="journal article" date="1998" name="J. Bacteriol.">
        <title>New small, acid-soluble proteins unique to spores of Bacillus subtilis: identification of the coding genes and regulation and function of two of these genes.</title>
        <authorList>
            <person name="Bagyan I."/>
            <person name="Setlow B."/>
            <person name="Setlow P."/>
        </authorList>
    </citation>
    <scope>PROTEIN SEQUENCE OF 1-12</scope>
    <scope>SUBCELLULAR LOCATION</scope>
</reference>
<reference key="3">
    <citation type="journal article" date="1999" name="Gene">
        <title>Regulation of four genes encoding small, acid-soluble spore proteins in Bacillus subtilis.</title>
        <authorList>
            <person name="Cabrera-Hernandez A."/>
            <person name="Sanchez-Salas J.-L."/>
            <person name="Paidhungat M."/>
            <person name="Setlow P."/>
        </authorList>
    </citation>
    <scope>REGULATION OF EXPRESSION</scope>
</reference>